<dbReference type="EMBL" id="CP000524">
    <property type="protein sequence ID" value="ABM44710.1"/>
    <property type="molecule type" value="Genomic_DNA"/>
</dbReference>
<dbReference type="RefSeq" id="WP_005765871.1">
    <property type="nucleotide sequence ID" value="NC_008783.1"/>
</dbReference>
<dbReference type="SMR" id="A1UR48"/>
<dbReference type="STRING" id="360095.BARBAKC583_0113"/>
<dbReference type="GeneID" id="4684822"/>
<dbReference type="KEGG" id="bbk:BARBAKC583_0113"/>
<dbReference type="PATRIC" id="fig|360095.6.peg.112"/>
<dbReference type="eggNOG" id="COG0224">
    <property type="taxonomic scope" value="Bacteria"/>
</dbReference>
<dbReference type="HOGENOM" id="CLU_050669_0_1_5"/>
<dbReference type="OrthoDB" id="9812769at2"/>
<dbReference type="Proteomes" id="UP000000643">
    <property type="component" value="Chromosome"/>
</dbReference>
<dbReference type="GO" id="GO:0005886">
    <property type="term" value="C:plasma membrane"/>
    <property type="evidence" value="ECO:0007669"/>
    <property type="project" value="UniProtKB-SubCell"/>
</dbReference>
<dbReference type="GO" id="GO:0045259">
    <property type="term" value="C:proton-transporting ATP synthase complex"/>
    <property type="evidence" value="ECO:0007669"/>
    <property type="project" value="UniProtKB-KW"/>
</dbReference>
<dbReference type="GO" id="GO:0005524">
    <property type="term" value="F:ATP binding"/>
    <property type="evidence" value="ECO:0007669"/>
    <property type="project" value="UniProtKB-UniRule"/>
</dbReference>
<dbReference type="GO" id="GO:0046933">
    <property type="term" value="F:proton-transporting ATP synthase activity, rotational mechanism"/>
    <property type="evidence" value="ECO:0007669"/>
    <property type="project" value="UniProtKB-UniRule"/>
</dbReference>
<dbReference type="GO" id="GO:0042777">
    <property type="term" value="P:proton motive force-driven plasma membrane ATP synthesis"/>
    <property type="evidence" value="ECO:0007669"/>
    <property type="project" value="UniProtKB-UniRule"/>
</dbReference>
<dbReference type="CDD" id="cd12151">
    <property type="entry name" value="F1-ATPase_gamma"/>
    <property type="match status" value="1"/>
</dbReference>
<dbReference type="FunFam" id="1.10.287.80:FF:000001">
    <property type="entry name" value="ATP synthase gamma chain"/>
    <property type="match status" value="1"/>
</dbReference>
<dbReference type="FunFam" id="1.10.287.80:FF:000003">
    <property type="entry name" value="ATP synthase gamma chain, chloroplastic"/>
    <property type="match status" value="1"/>
</dbReference>
<dbReference type="Gene3D" id="3.40.1380.10">
    <property type="match status" value="1"/>
</dbReference>
<dbReference type="Gene3D" id="1.10.287.80">
    <property type="entry name" value="ATP synthase, gamma subunit, helix hairpin domain"/>
    <property type="match status" value="1"/>
</dbReference>
<dbReference type="HAMAP" id="MF_00815">
    <property type="entry name" value="ATP_synth_gamma_bact"/>
    <property type="match status" value="1"/>
</dbReference>
<dbReference type="InterPro" id="IPR035968">
    <property type="entry name" value="ATP_synth_F1_ATPase_gsu"/>
</dbReference>
<dbReference type="InterPro" id="IPR000131">
    <property type="entry name" value="ATP_synth_F1_gsu"/>
</dbReference>
<dbReference type="InterPro" id="IPR023632">
    <property type="entry name" value="ATP_synth_F1_gsu_CS"/>
</dbReference>
<dbReference type="NCBIfam" id="TIGR01146">
    <property type="entry name" value="ATPsyn_F1gamma"/>
    <property type="match status" value="1"/>
</dbReference>
<dbReference type="NCBIfam" id="NF004146">
    <property type="entry name" value="PRK05621.1-4"/>
    <property type="match status" value="1"/>
</dbReference>
<dbReference type="PANTHER" id="PTHR11693">
    <property type="entry name" value="ATP SYNTHASE GAMMA CHAIN"/>
    <property type="match status" value="1"/>
</dbReference>
<dbReference type="PANTHER" id="PTHR11693:SF22">
    <property type="entry name" value="ATP SYNTHASE SUBUNIT GAMMA, MITOCHONDRIAL"/>
    <property type="match status" value="1"/>
</dbReference>
<dbReference type="Pfam" id="PF00231">
    <property type="entry name" value="ATP-synt"/>
    <property type="match status" value="1"/>
</dbReference>
<dbReference type="PIRSF" id="PIRSF039089">
    <property type="entry name" value="ATP_synthase_gamma"/>
    <property type="match status" value="1"/>
</dbReference>
<dbReference type="PRINTS" id="PR00126">
    <property type="entry name" value="ATPASEGAMMA"/>
</dbReference>
<dbReference type="SUPFAM" id="SSF52943">
    <property type="entry name" value="ATP synthase (F1-ATPase), gamma subunit"/>
    <property type="match status" value="1"/>
</dbReference>
<dbReference type="PROSITE" id="PS00153">
    <property type="entry name" value="ATPASE_GAMMA"/>
    <property type="match status" value="1"/>
</dbReference>
<reference key="1">
    <citation type="submission" date="2006-12" db="EMBL/GenBank/DDBJ databases">
        <authorList>
            <person name="Hendrix L."/>
            <person name="Mohamoud Y."/>
            <person name="Radune D."/>
            <person name="Shvartsbeyn A."/>
            <person name="Daugherty S."/>
            <person name="Dodson R."/>
            <person name="Durkin A.S."/>
            <person name="Harkins D."/>
            <person name="Huot H."/>
            <person name="Kothari S.P."/>
            <person name="Madupu R."/>
            <person name="Li J."/>
            <person name="Nelson W.C."/>
            <person name="Shrivastava S."/>
            <person name="Giglio M.G."/>
            <person name="Haft D."/>
            <person name="Selengut J."/>
            <person name="Fraser-Ligget C."/>
            <person name="Seshadri R."/>
        </authorList>
    </citation>
    <scope>NUCLEOTIDE SEQUENCE [LARGE SCALE GENOMIC DNA]</scope>
    <source>
        <strain>ATCC 35685 / KC583 / Herrer 020/F12,63</strain>
    </source>
</reference>
<gene>
    <name evidence="1" type="primary">atpG</name>
    <name type="ordered locus">BARBAKC583_0113</name>
</gene>
<comment type="function">
    <text evidence="1">Produces ATP from ADP in the presence of a proton gradient across the membrane. The gamma chain is believed to be important in regulating ATPase activity and the flow of protons through the CF(0) complex.</text>
</comment>
<comment type="subunit">
    <text evidence="1">F-type ATPases have 2 components, CF(1) - the catalytic core - and CF(0) - the membrane proton channel. CF(1) has five subunits: alpha(3), beta(3), gamma(1), delta(1), epsilon(1). CF(0) has three main subunits: a, b and c.</text>
</comment>
<comment type="subcellular location">
    <subcellularLocation>
        <location evidence="1">Cell inner membrane</location>
        <topology evidence="1">Peripheral membrane protein</topology>
    </subcellularLocation>
</comment>
<comment type="similarity">
    <text evidence="1">Belongs to the ATPase gamma chain family.</text>
</comment>
<keyword id="KW-0066">ATP synthesis</keyword>
<keyword id="KW-0997">Cell inner membrane</keyword>
<keyword id="KW-1003">Cell membrane</keyword>
<keyword id="KW-0139">CF(1)</keyword>
<keyword id="KW-0375">Hydrogen ion transport</keyword>
<keyword id="KW-0406">Ion transport</keyword>
<keyword id="KW-0472">Membrane</keyword>
<keyword id="KW-0813">Transport</keyword>
<evidence type="ECO:0000255" key="1">
    <source>
        <dbReference type="HAMAP-Rule" id="MF_00815"/>
    </source>
</evidence>
<organism>
    <name type="scientific">Bartonella bacilliformis (strain ATCC 35685 / KC583 / Herrer 020/F12,63)</name>
    <dbReference type="NCBI Taxonomy" id="360095"/>
    <lineage>
        <taxon>Bacteria</taxon>
        <taxon>Pseudomonadati</taxon>
        <taxon>Pseudomonadota</taxon>
        <taxon>Alphaproteobacteria</taxon>
        <taxon>Hyphomicrobiales</taxon>
        <taxon>Bartonellaceae</taxon>
        <taxon>Bartonella</taxon>
    </lineage>
</organism>
<name>ATPG_BARBK</name>
<accession>A1UR48</accession>
<proteinExistence type="inferred from homology"/>
<feature type="chain" id="PRO_1000053160" description="ATP synthase gamma chain">
    <location>
        <begin position="1"/>
        <end position="302"/>
    </location>
</feature>
<protein>
    <recommendedName>
        <fullName evidence="1">ATP synthase gamma chain</fullName>
    </recommendedName>
    <alternativeName>
        <fullName evidence="1">ATP synthase F1 sector gamma subunit</fullName>
    </alternativeName>
    <alternativeName>
        <fullName evidence="1">F-ATPase gamma subunit</fullName>
    </alternativeName>
</protein>
<sequence length="302" mass="33147">MASLKDLRDRIASVKATQKITKAMQMVAAAKLHRAQEAVEAGRSYTQRMDALVTNISKDVDLVDAPLLMRGTGNDHVHLLVVCTAERGLCGAFNTQIARLAREHIQKLHAAGKTVKILTVGKKGADILLRDFKSLMIDHVDLRSVKKIGFAEAAKISKQLIDLFNEGAFDVCTLFYSRFVSVITQRPMALSLIPAGQNPVDEGQDFVDQAKSREVSQSAVYEYEPDVASLLNDLIPRHISVQIFQALLENVAGEMGAKMSAMDNASRNAGEMINKLTVTYNRQRQAQITTELIEIIAGAEAL</sequence>